<dbReference type="EMBL" id="CP000148">
    <property type="protein sequence ID" value="ABB30442.1"/>
    <property type="molecule type" value="Genomic_DNA"/>
</dbReference>
<dbReference type="RefSeq" id="WP_004512785.1">
    <property type="nucleotide sequence ID" value="NC_007517.1"/>
</dbReference>
<dbReference type="SMR" id="Q39Z82"/>
<dbReference type="STRING" id="269799.Gmet_0196"/>
<dbReference type="KEGG" id="gme:Gmet_0196"/>
<dbReference type="eggNOG" id="COG1058">
    <property type="taxonomic scope" value="Bacteria"/>
</dbReference>
<dbReference type="eggNOG" id="COG1546">
    <property type="taxonomic scope" value="Bacteria"/>
</dbReference>
<dbReference type="HOGENOM" id="CLU_030805_9_2_7"/>
<dbReference type="Proteomes" id="UP000007073">
    <property type="component" value="Chromosome"/>
</dbReference>
<dbReference type="CDD" id="cd00885">
    <property type="entry name" value="cinA"/>
    <property type="match status" value="1"/>
</dbReference>
<dbReference type="Gene3D" id="3.30.70.2860">
    <property type="match status" value="1"/>
</dbReference>
<dbReference type="Gene3D" id="3.90.950.20">
    <property type="entry name" value="CinA-like"/>
    <property type="match status" value="1"/>
</dbReference>
<dbReference type="Gene3D" id="3.40.980.10">
    <property type="entry name" value="MoaB/Mog-like domain"/>
    <property type="match status" value="1"/>
</dbReference>
<dbReference type="HAMAP" id="MF_00226_B">
    <property type="entry name" value="CinA_B"/>
    <property type="match status" value="1"/>
</dbReference>
<dbReference type="InterPro" id="IPR050101">
    <property type="entry name" value="CinA"/>
</dbReference>
<dbReference type="InterPro" id="IPR036653">
    <property type="entry name" value="CinA-like_C"/>
</dbReference>
<dbReference type="InterPro" id="IPR008136">
    <property type="entry name" value="CinA_C"/>
</dbReference>
<dbReference type="InterPro" id="IPR041424">
    <property type="entry name" value="CinA_KH"/>
</dbReference>
<dbReference type="InterPro" id="IPR008135">
    <property type="entry name" value="Competence-induced_CinA"/>
</dbReference>
<dbReference type="InterPro" id="IPR036425">
    <property type="entry name" value="MoaB/Mog-like_dom_sf"/>
</dbReference>
<dbReference type="InterPro" id="IPR001453">
    <property type="entry name" value="MoaB/Mog_dom"/>
</dbReference>
<dbReference type="NCBIfam" id="TIGR00200">
    <property type="entry name" value="cinA_nterm"/>
    <property type="match status" value="1"/>
</dbReference>
<dbReference type="NCBIfam" id="TIGR00177">
    <property type="entry name" value="molyb_syn"/>
    <property type="match status" value="1"/>
</dbReference>
<dbReference type="NCBIfam" id="TIGR00199">
    <property type="entry name" value="PncC_domain"/>
    <property type="match status" value="1"/>
</dbReference>
<dbReference type="NCBIfam" id="NF001813">
    <property type="entry name" value="PRK00549.1"/>
    <property type="match status" value="1"/>
</dbReference>
<dbReference type="PANTHER" id="PTHR13939">
    <property type="entry name" value="NICOTINAMIDE-NUCLEOTIDE AMIDOHYDROLASE PNCC"/>
    <property type="match status" value="1"/>
</dbReference>
<dbReference type="PANTHER" id="PTHR13939:SF0">
    <property type="entry name" value="NMN AMIDOHYDROLASE-LIKE PROTEIN YFAY"/>
    <property type="match status" value="1"/>
</dbReference>
<dbReference type="Pfam" id="PF02464">
    <property type="entry name" value="CinA"/>
    <property type="match status" value="1"/>
</dbReference>
<dbReference type="Pfam" id="PF18146">
    <property type="entry name" value="CinA_KH"/>
    <property type="match status" value="1"/>
</dbReference>
<dbReference type="Pfam" id="PF00994">
    <property type="entry name" value="MoCF_biosynth"/>
    <property type="match status" value="1"/>
</dbReference>
<dbReference type="PIRSF" id="PIRSF006728">
    <property type="entry name" value="CinA"/>
    <property type="match status" value="1"/>
</dbReference>
<dbReference type="SMART" id="SM00852">
    <property type="entry name" value="MoCF_biosynth"/>
    <property type="match status" value="1"/>
</dbReference>
<dbReference type="SUPFAM" id="SSF142433">
    <property type="entry name" value="CinA-like"/>
    <property type="match status" value="1"/>
</dbReference>
<dbReference type="SUPFAM" id="SSF53218">
    <property type="entry name" value="Molybdenum cofactor biosynthesis proteins"/>
    <property type="match status" value="1"/>
</dbReference>
<comment type="similarity">
    <text evidence="1">Belongs to the CinA family.</text>
</comment>
<name>CINAL_GEOMG</name>
<protein>
    <recommendedName>
        <fullName evidence="1">CinA-like protein</fullName>
    </recommendedName>
</protein>
<organism>
    <name type="scientific">Geobacter metallireducens (strain ATCC 53774 / DSM 7210 / GS-15)</name>
    <dbReference type="NCBI Taxonomy" id="269799"/>
    <lineage>
        <taxon>Bacteria</taxon>
        <taxon>Pseudomonadati</taxon>
        <taxon>Thermodesulfobacteriota</taxon>
        <taxon>Desulfuromonadia</taxon>
        <taxon>Geobacterales</taxon>
        <taxon>Geobacteraceae</taxon>
        <taxon>Geobacter</taxon>
    </lineage>
</organism>
<evidence type="ECO:0000255" key="1">
    <source>
        <dbReference type="HAMAP-Rule" id="MF_00226"/>
    </source>
</evidence>
<reference key="1">
    <citation type="journal article" date="2009" name="BMC Microbiol.">
        <title>The genome sequence of Geobacter metallireducens: features of metabolism, physiology and regulation common and dissimilar to Geobacter sulfurreducens.</title>
        <authorList>
            <person name="Aklujkar M."/>
            <person name="Krushkal J."/>
            <person name="DiBartolo G."/>
            <person name="Lapidus A."/>
            <person name="Land M.L."/>
            <person name="Lovley D.R."/>
        </authorList>
    </citation>
    <scope>NUCLEOTIDE SEQUENCE [LARGE SCALE GENOMIC DNA]</scope>
    <source>
        <strain>ATCC 53774 / DSM 7210 / GS-15</strain>
    </source>
</reference>
<accession>Q39Z82</accession>
<gene>
    <name type="ordered locus">Gmet_0196</name>
</gene>
<sequence>MKTALLSIGDELLLGEVVDTNSARIAARLADEGIVTARKLTVGDDEGEIAGALEELARGHDVVIATGGLGPTDDDVTARAAARATGRRLVLNEEAMGHLREFFVRLGREMHPANGRQCLLPAKAELIPNPTGTASGFYLPLDRCLLMFLPGVPSEMAVMLDETVVPLVLERRGEHRRTRTLTLTVFGLSEAEIGARLSDLDRSRPGLTVAYCVEYPVVQVKLRATGEDEGALTALLEDGAALVRERLGGHVVAGDGETIDTTVARLFRETGMTLALAESCTGGLIAGRVTAIPGSSAYFFLSAVTYANDAKARLLGVPQGLLAETGAVSAEVAKAMARGARQLAGSDLALAVTGIAGPEGGSPDKPVGTVFIALADQAGCSAKGYHFRGDRDRIRTITAVTAMDWLRRRLLSH</sequence>
<keyword id="KW-1185">Reference proteome</keyword>
<feature type="chain" id="PRO_1000058709" description="CinA-like protein">
    <location>
        <begin position="1"/>
        <end position="413"/>
    </location>
</feature>
<proteinExistence type="inferred from homology"/>